<reference key="1">
    <citation type="submission" date="2008-01" db="EMBL/GenBank/DDBJ databases">
        <title>Complete sequence of Pseudomonas putida GB-1.</title>
        <authorList>
            <consortium name="US DOE Joint Genome Institute"/>
            <person name="Copeland A."/>
            <person name="Lucas S."/>
            <person name="Lapidus A."/>
            <person name="Barry K."/>
            <person name="Glavina del Rio T."/>
            <person name="Dalin E."/>
            <person name="Tice H."/>
            <person name="Pitluck S."/>
            <person name="Bruce D."/>
            <person name="Goodwin L."/>
            <person name="Chertkov O."/>
            <person name="Brettin T."/>
            <person name="Detter J.C."/>
            <person name="Han C."/>
            <person name="Kuske C.R."/>
            <person name="Schmutz J."/>
            <person name="Larimer F."/>
            <person name="Land M."/>
            <person name="Hauser L."/>
            <person name="Kyrpides N."/>
            <person name="Kim E."/>
            <person name="McCarthy J.K."/>
            <person name="Richardson P."/>
        </authorList>
    </citation>
    <scope>NUCLEOTIDE SEQUENCE [LARGE SCALE GENOMIC DNA]</scope>
    <source>
        <strain>GB-1</strain>
    </source>
</reference>
<keyword id="KW-0963">Cytoplasm</keyword>
<keyword id="KW-0489">Methyltransferase</keyword>
<keyword id="KW-0698">rRNA processing</keyword>
<keyword id="KW-0949">S-adenosyl-L-methionine</keyword>
<keyword id="KW-0808">Transferase</keyword>
<feature type="chain" id="PRO_0000387056" description="Ribosomal RNA small subunit methyltransferase H">
    <location>
        <begin position="1"/>
        <end position="315"/>
    </location>
</feature>
<feature type="binding site" evidence="1">
    <location>
        <begin position="37"/>
        <end position="39"/>
    </location>
    <ligand>
        <name>S-adenosyl-L-methionine</name>
        <dbReference type="ChEBI" id="CHEBI:59789"/>
    </ligand>
</feature>
<feature type="binding site" evidence="1">
    <location>
        <position position="57"/>
    </location>
    <ligand>
        <name>S-adenosyl-L-methionine</name>
        <dbReference type="ChEBI" id="CHEBI:59789"/>
    </ligand>
</feature>
<feature type="binding site" evidence="1">
    <location>
        <position position="83"/>
    </location>
    <ligand>
        <name>S-adenosyl-L-methionine</name>
        <dbReference type="ChEBI" id="CHEBI:59789"/>
    </ligand>
</feature>
<feature type="binding site" evidence="1">
    <location>
        <position position="105"/>
    </location>
    <ligand>
        <name>S-adenosyl-L-methionine</name>
        <dbReference type="ChEBI" id="CHEBI:59789"/>
    </ligand>
</feature>
<feature type="binding site" evidence="1">
    <location>
        <position position="112"/>
    </location>
    <ligand>
        <name>S-adenosyl-L-methionine</name>
        <dbReference type="ChEBI" id="CHEBI:59789"/>
    </ligand>
</feature>
<name>RSMH_PSEPG</name>
<sequence>MTIDSGFNHITVLLDEAVEALALRADGCYLDGTFGRGGHSRLILSKLGPQGRLLGFDKDPQAIATGQALAAEDGRFVIVQRSFAELGAEVAERGLHGKVSGVLLDLGVSSPQLDDPERGFSFLNDGPLDMRMNPGQGISAAEFIATAPVEEIARVFKEYGEERFAGRMARAVVERREKQPFTRTADLAEVLKVANPAWEKGKNPATRAFQGLRIHVNNELGDLEAGLEAALDALEVGGRLAVISFHSLEDRIVKLFMRKLVKGEADNLPRNLPVQHKVFEPKIKLIGKAQFASEAELKANPRSRSAVMRVAEKLR</sequence>
<accession>B0KFT4</accession>
<gene>
    <name evidence="1" type="primary">rsmH</name>
    <name type="synonym">mraW</name>
    <name type="ordered locus">PputGB1_4520</name>
</gene>
<organism>
    <name type="scientific">Pseudomonas putida (strain GB-1)</name>
    <dbReference type="NCBI Taxonomy" id="76869"/>
    <lineage>
        <taxon>Bacteria</taxon>
        <taxon>Pseudomonadati</taxon>
        <taxon>Pseudomonadota</taxon>
        <taxon>Gammaproteobacteria</taxon>
        <taxon>Pseudomonadales</taxon>
        <taxon>Pseudomonadaceae</taxon>
        <taxon>Pseudomonas</taxon>
    </lineage>
</organism>
<comment type="function">
    <text evidence="1">Specifically methylates the N4 position of cytidine in position 1402 (C1402) of 16S rRNA.</text>
</comment>
<comment type="catalytic activity">
    <reaction evidence="1">
        <text>cytidine(1402) in 16S rRNA + S-adenosyl-L-methionine = N(4)-methylcytidine(1402) in 16S rRNA + S-adenosyl-L-homocysteine + H(+)</text>
        <dbReference type="Rhea" id="RHEA:42928"/>
        <dbReference type="Rhea" id="RHEA-COMP:10286"/>
        <dbReference type="Rhea" id="RHEA-COMP:10287"/>
        <dbReference type="ChEBI" id="CHEBI:15378"/>
        <dbReference type="ChEBI" id="CHEBI:57856"/>
        <dbReference type="ChEBI" id="CHEBI:59789"/>
        <dbReference type="ChEBI" id="CHEBI:74506"/>
        <dbReference type="ChEBI" id="CHEBI:82748"/>
        <dbReference type="EC" id="2.1.1.199"/>
    </reaction>
</comment>
<comment type="subcellular location">
    <subcellularLocation>
        <location evidence="1">Cytoplasm</location>
    </subcellularLocation>
</comment>
<comment type="similarity">
    <text evidence="1">Belongs to the methyltransferase superfamily. RsmH family.</text>
</comment>
<dbReference type="EC" id="2.1.1.199" evidence="1"/>
<dbReference type="EMBL" id="CP000926">
    <property type="protein sequence ID" value="ABZ00407.1"/>
    <property type="molecule type" value="Genomic_DNA"/>
</dbReference>
<dbReference type="SMR" id="B0KFT4"/>
<dbReference type="KEGG" id="ppg:PputGB1_4520"/>
<dbReference type="eggNOG" id="COG0275">
    <property type="taxonomic scope" value="Bacteria"/>
</dbReference>
<dbReference type="HOGENOM" id="CLU_038422_2_0_6"/>
<dbReference type="Proteomes" id="UP000002157">
    <property type="component" value="Chromosome"/>
</dbReference>
<dbReference type="GO" id="GO:0005737">
    <property type="term" value="C:cytoplasm"/>
    <property type="evidence" value="ECO:0007669"/>
    <property type="project" value="UniProtKB-SubCell"/>
</dbReference>
<dbReference type="GO" id="GO:0071424">
    <property type="term" value="F:rRNA (cytosine-N4-)-methyltransferase activity"/>
    <property type="evidence" value="ECO:0007669"/>
    <property type="project" value="UniProtKB-UniRule"/>
</dbReference>
<dbReference type="GO" id="GO:0070475">
    <property type="term" value="P:rRNA base methylation"/>
    <property type="evidence" value="ECO:0007669"/>
    <property type="project" value="UniProtKB-UniRule"/>
</dbReference>
<dbReference type="FunFam" id="1.10.150.170:FF:000003">
    <property type="entry name" value="Ribosomal RNA small subunit methyltransferase H"/>
    <property type="match status" value="1"/>
</dbReference>
<dbReference type="Gene3D" id="1.10.150.170">
    <property type="entry name" value="Putative methyltransferase TM0872, insert domain"/>
    <property type="match status" value="1"/>
</dbReference>
<dbReference type="Gene3D" id="3.40.50.150">
    <property type="entry name" value="Vaccinia Virus protein VP39"/>
    <property type="match status" value="1"/>
</dbReference>
<dbReference type="HAMAP" id="MF_01007">
    <property type="entry name" value="16SrRNA_methyltr_H"/>
    <property type="match status" value="1"/>
</dbReference>
<dbReference type="InterPro" id="IPR002903">
    <property type="entry name" value="RsmH"/>
</dbReference>
<dbReference type="InterPro" id="IPR023397">
    <property type="entry name" value="SAM-dep_MeTrfase_MraW_recog"/>
</dbReference>
<dbReference type="InterPro" id="IPR029063">
    <property type="entry name" value="SAM-dependent_MTases_sf"/>
</dbReference>
<dbReference type="NCBIfam" id="TIGR00006">
    <property type="entry name" value="16S rRNA (cytosine(1402)-N(4))-methyltransferase RsmH"/>
    <property type="match status" value="1"/>
</dbReference>
<dbReference type="PANTHER" id="PTHR11265:SF0">
    <property type="entry name" value="12S RRNA N4-METHYLCYTIDINE METHYLTRANSFERASE"/>
    <property type="match status" value="1"/>
</dbReference>
<dbReference type="PANTHER" id="PTHR11265">
    <property type="entry name" value="S-ADENOSYL-METHYLTRANSFERASE MRAW"/>
    <property type="match status" value="1"/>
</dbReference>
<dbReference type="Pfam" id="PF01795">
    <property type="entry name" value="Methyltransf_5"/>
    <property type="match status" value="1"/>
</dbReference>
<dbReference type="PIRSF" id="PIRSF004486">
    <property type="entry name" value="MraW"/>
    <property type="match status" value="1"/>
</dbReference>
<dbReference type="SUPFAM" id="SSF81799">
    <property type="entry name" value="Putative methyltransferase TM0872, insert domain"/>
    <property type="match status" value="1"/>
</dbReference>
<dbReference type="SUPFAM" id="SSF53335">
    <property type="entry name" value="S-adenosyl-L-methionine-dependent methyltransferases"/>
    <property type="match status" value="1"/>
</dbReference>
<evidence type="ECO:0000255" key="1">
    <source>
        <dbReference type="HAMAP-Rule" id="MF_01007"/>
    </source>
</evidence>
<protein>
    <recommendedName>
        <fullName evidence="1">Ribosomal RNA small subunit methyltransferase H</fullName>
        <ecNumber evidence="1">2.1.1.199</ecNumber>
    </recommendedName>
    <alternativeName>
        <fullName evidence="1">16S rRNA m(4)C1402 methyltransferase</fullName>
    </alternativeName>
    <alternativeName>
        <fullName evidence="1">rRNA (cytosine-N(4)-)-methyltransferase RsmH</fullName>
    </alternativeName>
</protein>
<proteinExistence type="inferred from homology"/>